<feature type="chain" id="PRO_1000020448" description="Threonine--tRNA ligase">
    <location>
        <begin position="1"/>
        <end position="642"/>
    </location>
</feature>
<feature type="domain" description="TGS" evidence="2">
    <location>
        <begin position="1"/>
        <end position="63"/>
    </location>
</feature>
<feature type="region of interest" description="Catalytic" evidence="1">
    <location>
        <begin position="242"/>
        <end position="533"/>
    </location>
</feature>
<feature type="binding site" evidence="1">
    <location>
        <position position="334"/>
    </location>
    <ligand>
        <name>Zn(2+)</name>
        <dbReference type="ChEBI" id="CHEBI:29105"/>
    </ligand>
</feature>
<feature type="binding site" evidence="1">
    <location>
        <position position="385"/>
    </location>
    <ligand>
        <name>Zn(2+)</name>
        <dbReference type="ChEBI" id="CHEBI:29105"/>
    </ligand>
</feature>
<feature type="binding site" evidence="1">
    <location>
        <position position="510"/>
    </location>
    <ligand>
        <name>Zn(2+)</name>
        <dbReference type="ChEBI" id="CHEBI:29105"/>
    </ligand>
</feature>
<reference key="1">
    <citation type="journal article" date="2005" name="Genome Res.">
        <title>Living with two extremes: conclusions from the genome sequence of Natronomonas pharaonis.</title>
        <authorList>
            <person name="Falb M."/>
            <person name="Pfeiffer F."/>
            <person name="Palm P."/>
            <person name="Rodewald K."/>
            <person name="Hickmann V."/>
            <person name="Tittor J."/>
            <person name="Oesterhelt D."/>
        </authorList>
    </citation>
    <scope>NUCLEOTIDE SEQUENCE [LARGE SCALE GENOMIC DNA]</scope>
    <source>
        <strain>ATCC 35678 / DSM 2160 / CIP 103997 / JCM 8858 / NBRC 14720 / NCIMB 2260 / Gabara</strain>
    </source>
</reference>
<protein>
    <recommendedName>
        <fullName evidence="1">Threonine--tRNA ligase</fullName>
        <ecNumber evidence="1">6.1.1.3</ecNumber>
    </recommendedName>
    <alternativeName>
        <fullName evidence="1">Threonyl-tRNA synthetase</fullName>
        <shortName evidence="1">ThrRS</shortName>
    </alternativeName>
</protein>
<dbReference type="EC" id="6.1.1.3" evidence="1"/>
<dbReference type="EMBL" id="CR936257">
    <property type="protein sequence ID" value="CAI49296.1"/>
    <property type="molecule type" value="Genomic_DNA"/>
</dbReference>
<dbReference type="RefSeq" id="WP_011322922.1">
    <property type="nucleotide sequence ID" value="NC_007426.1"/>
</dbReference>
<dbReference type="SMR" id="Q3IRE7"/>
<dbReference type="STRING" id="348780.NP_2410A"/>
<dbReference type="EnsemblBacteria" id="CAI49296">
    <property type="protein sequence ID" value="CAI49296"/>
    <property type="gene ID" value="NP_2410A"/>
</dbReference>
<dbReference type="GeneID" id="3703256"/>
<dbReference type="KEGG" id="nph:NP_2410A"/>
<dbReference type="eggNOG" id="arCOG00401">
    <property type="taxonomic scope" value="Archaea"/>
</dbReference>
<dbReference type="HOGENOM" id="CLU_008554_0_1_2"/>
<dbReference type="OrthoDB" id="372136at2157"/>
<dbReference type="Proteomes" id="UP000002698">
    <property type="component" value="Chromosome"/>
</dbReference>
<dbReference type="GO" id="GO:0005737">
    <property type="term" value="C:cytoplasm"/>
    <property type="evidence" value="ECO:0007669"/>
    <property type="project" value="UniProtKB-SubCell"/>
</dbReference>
<dbReference type="GO" id="GO:0002161">
    <property type="term" value="F:aminoacyl-tRNA deacylase activity"/>
    <property type="evidence" value="ECO:0007669"/>
    <property type="project" value="UniProtKB-ARBA"/>
</dbReference>
<dbReference type="GO" id="GO:0005524">
    <property type="term" value="F:ATP binding"/>
    <property type="evidence" value="ECO:0007669"/>
    <property type="project" value="UniProtKB-UniRule"/>
</dbReference>
<dbReference type="GO" id="GO:0046872">
    <property type="term" value="F:metal ion binding"/>
    <property type="evidence" value="ECO:0007669"/>
    <property type="project" value="UniProtKB-KW"/>
</dbReference>
<dbReference type="GO" id="GO:0004829">
    <property type="term" value="F:threonine-tRNA ligase activity"/>
    <property type="evidence" value="ECO:0007669"/>
    <property type="project" value="UniProtKB-UniRule"/>
</dbReference>
<dbReference type="GO" id="GO:0000049">
    <property type="term" value="F:tRNA binding"/>
    <property type="evidence" value="ECO:0007669"/>
    <property type="project" value="UniProtKB-KW"/>
</dbReference>
<dbReference type="GO" id="GO:0006435">
    <property type="term" value="P:threonyl-tRNA aminoacylation"/>
    <property type="evidence" value="ECO:0007669"/>
    <property type="project" value="UniProtKB-UniRule"/>
</dbReference>
<dbReference type="CDD" id="cd01667">
    <property type="entry name" value="TGS_ThrRS"/>
    <property type="match status" value="1"/>
</dbReference>
<dbReference type="CDD" id="cd00860">
    <property type="entry name" value="ThrRS_anticodon"/>
    <property type="match status" value="1"/>
</dbReference>
<dbReference type="CDD" id="cd00771">
    <property type="entry name" value="ThrRS_core"/>
    <property type="match status" value="1"/>
</dbReference>
<dbReference type="FunFam" id="3.30.930.10:FF:000002">
    <property type="entry name" value="Threonine--tRNA ligase"/>
    <property type="match status" value="1"/>
</dbReference>
<dbReference type="FunFam" id="3.40.50.800:FF:000001">
    <property type="entry name" value="Threonine--tRNA ligase"/>
    <property type="match status" value="1"/>
</dbReference>
<dbReference type="FunFam" id="3.30.980.10:FF:000005">
    <property type="entry name" value="Threonyl-tRNA synthetase, mitochondrial"/>
    <property type="match status" value="1"/>
</dbReference>
<dbReference type="Gene3D" id="3.10.20.30">
    <property type="match status" value="1"/>
</dbReference>
<dbReference type="Gene3D" id="3.30.54.20">
    <property type="match status" value="1"/>
</dbReference>
<dbReference type="Gene3D" id="3.40.50.800">
    <property type="entry name" value="Anticodon-binding domain"/>
    <property type="match status" value="1"/>
</dbReference>
<dbReference type="Gene3D" id="3.30.930.10">
    <property type="entry name" value="Bira Bifunctional Protein, Domain 2"/>
    <property type="match status" value="1"/>
</dbReference>
<dbReference type="Gene3D" id="3.30.980.10">
    <property type="entry name" value="Threonyl-trna Synthetase, Chain A, domain 2"/>
    <property type="match status" value="1"/>
</dbReference>
<dbReference type="HAMAP" id="MF_00184">
    <property type="entry name" value="Thr_tRNA_synth"/>
    <property type="match status" value="1"/>
</dbReference>
<dbReference type="InterPro" id="IPR002314">
    <property type="entry name" value="aa-tRNA-synt_IIb"/>
</dbReference>
<dbReference type="InterPro" id="IPR006195">
    <property type="entry name" value="aa-tRNA-synth_II"/>
</dbReference>
<dbReference type="InterPro" id="IPR045864">
    <property type="entry name" value="aa-tRNA-synth_II/BPL/LPL"/>
</dbReference>
<dbReference type="InterPro" id="IPR004154">
    <property type="entry name" value="Anticodon-bd"/>
</dbReference>
<dbReference type="InterPro" id="IPR036621">
    <property type="entry name" value="Anticodon-bd_dom_sf"/>
</dbReference>
<dbReference type="InterPro" id="IPR012675">
    <property type="entry name" value="Beta-grasp_dom_sf"/>
</dbReference>
<dbReference type="InterPro" id="IPR004095">
    <property type="entry name" value="TGS"/>
</dbReference>
<dbReference type="InterPro" id="IPR012676">
    <property type="entry name" value="TGS-like"/>
</dbReference>
<dbReference type="InterPro" id="IPR002320">
    <property type="entry name" value="Thr-tRNA-ligase_IIa"/>
</dbReference>
<dbReference type="InterPro" id="IPR018163">
    <property type="entry name" value="Thr/Ala-tRNA-synth_IIc_edit"/>
</dbReference>
<dbReference type="InterPro" id="IPR047246">
    <property type="entry name" value="ThrRS_anticodon"/>
</dbReference>
<dbReference type="InterPro" id="IPR033728">
    <property type="entry name" value="ThrRS_core"/>
</dbReference>
<dbReference type="InterPro" id="IPR012947">
    <property type="entry name" value="tRNA_SAD"/>
</dbReference>
<dbReference type="NCBIfam" id="TIGR00418">
    <property type="entry name" value="thrS"/>
    <property type="match status" value="1"/>
</dbReference>
<dbReference type="PANTHER" id="PTHR11451:SF44">
    <property type="entry name" value="THREONINE--TRNA LIGASE, CHLOROPLASTIC_MITOCHONDRIAL 2"/>
    <property type="match status" value="1"/>
</dbReference>
<dbReference type="PANTHER" id="PTHR11451">
    <property type="entry name" value="THREONINE-TRNA LIGASE"/>
    <property type="match status" value="1"/>
</dbReference>
<dbReference type="Pfam" id="PF03129">
    <property type="entry name" value="HGTP_anticodon"/>
    <property type="match status" value="1"/>
</dbReference>
<dbReference type="Pfam" id="PF02824">
    <property type="entry name" value="TGS"/>
    <property type="match status" value="1"/>
</dbReference>
<dbReference type="Pfam" id="PF00587">
    <property type="entry name" value="tRNA-synt_2b"/>
    <property type="match status" value="1"/>
</dbReference>
<dbReference type="Pfam" id="PF07973">
    <property type="entry name" value="tRNA_SAD"/>
    <property type="match status" value="1"/>
</dbReference>
<dbReference type="PRINTS" id="PR01047">
    <property type="entry name" value="TRNASYNTHTHR"/>
</dbReference>
<dbReference type="SMART" id="SM00863">
    <property type="entry name" value="tRNA_SAD"/>
    <property type="match status" value="1"/>
</dbReference>
<dbReference type="SUPFAM" id="SSF52954">
    <property type="entry name" value="Class II aaRS ABD-related"/>
    <property type="match status" value="1"/>
</dbReference>
<dbReference type="SUPFAM" id="SSF55681">
    <property type="entry name" value="Class II aaRS and biotin synthetases"/>
    <property type="match status" value="1"/>
</dbReference>
<dbReference type="SUPFAM" id="SSF81271">
    <property type="entry name" value="TGS-like"/>
    <property type="match status" value="1"/>
</dbReference>
<dbReference type="SUPFAM" id="SSF55186">
    <property type="entry name" value="ThrRS/AlaRS common domain"/>
    <property type="match status" value="1"/>
</dbReference>
<dbReference type="PROSITE" id="PS50862">
    <property type="entry name" value="AA_TRNA_LIGASE_II"/>
    <property type="match status" value="1"/>
</dbReference>
<dbReference type="PROSITE" id="PS51880">
    <property type="entry name" value="TGS"/>
    <property type="match status" value="1"/>
</dbReference>
<name>SYT_NATPD</name>
<keyword id="KW-0030">Aminoacyl-tRNA synthetase</keyword>
<keyword id="KW-0067">ATP-binding</keyword>
<keyword id="KW-0963">Cytoplasm</keyword>
<keyword id="KW-0436">Ligase</keyword>
<keyword id="KW-0479">Metal-binding</keyword>
<keyword id="KW-0547">Nucleotide-binding</keyword>
<keyword id="KW-0648">Protein biosynthesis</keyword>
<keyword id="KW-1185">Reference proteome</keyword>
<keyword id="KW-0694">RNA-binding</keyword>
<keyword id="KW-0820">tRNA-binding</keyword>
<keyword id="KW-0862">Zinc</keyword>
<accession>Q3IRE7</accession>
<organism>
    <name type="scientific">Natronomonas pharaonis (strain ATCC 35678 / DSM 2160 / CIP 103997 / JCM 8858 / NBRC 14720 / NCIMB 2260 / Gabara)</name>
    <name type="common">Halobacterium pharaonis</name>
    <dbReference type="NCBI Taxonomy" id="348780"/>
    <lineage>
        <taxon>Archaea</taxon>
        <taxon>Methanobacteriati</taxon>
        <taxon>Methanobacteriota</taxon>
        <taxon>Stenosarchaea group</taxon>
        <taxon>Halobacteria</taxon>
        <taxon>Halobacteriales</taxon>
        <taxon>Haloarculaceae</taxon>
        <taxon>Natronomonas</taxon>
    </lineage>
</organism>
<evidence type="ECO:0000255" key="1">
    <source>
        <dbReference type="HAMAP-Rule" id="MF_00184"/>
    </source>
</evidence>
<evidence type="ECO:0000255" key="2">
    <source>
        <dbReference type="PROSITE-ProRule" id="PRU01228"/>
    </source>
</evidence>
<gene>
    <name evidence="1" type="primary">thrS</name>
    <name type="ordered locus">NP_2410A</name>
</gene>
<comment type="function">
    <text evidence="1">Catalyzes the attachment of threonine to tRNA(Thr) in a two-step reaction: L-threonine is first activated by ATP to form Thr-AMP and then transferred to the acceptor end of tRNA(Thr).</text>
</comment>
<comment type="catalytic activity">
    <reaction evidence="1">
        <text>tRNA(Thr) + L-threonine + ATP = L-threonyl-tRNA(Thr) + AMP + diphosphate + H(+)</text>
        <dbReference type="Rhea" id="RHEA:24624"/>
        <dbReference type="Rhea" id="RHEA-COMP:9670"/>
        <dbReference type="Rhea" id="RHEA-COMP:9704"/>
        <dbReference type="ChEBI" id="CHEBI:15378"/>
        <dbReference type="ChEBI" id="CHEBI:30616"/>
        <dbReference type="ChEBI" id="CHEBI:33019"/>
        <dbReference type="ChEBI" id="CHEBI:57926"/>
        <dbReference type="ChEBI" id="CHEBI:78442"/>
        <dbReference type="ChEBI" id="CHEBI:78534"/>
        <dbReference type="ChEBI" id="CHEBI:456215"/>
        <dbReference type="EC" id="6.1.1.3"/>
    </reaction>
</comment>
<comment type="cofactor">
    <cofactor evidence="1">
        <name>Zn(2+)</name>
        <dbReference type="ChEBI" id="CHEBI:29105"/>
    </cofactor>
    <text evidence="1">Binds 1 zinc ion per subunit.</text>
</comment>
<comment type="subunit">
    <text evidence="1">Homodimer.</text>
</comment>
<comment type="subcellular location">
    <subcellularLocation>
        <location evidence="1">Cytoplasm</location>
    </subcellularLocation>
</comment>
<comment type="similarity">
    <text evidence="1">Belongs to the class-II aminoacyl-tRNA synthetase family.</text>
</comment>
<proteinExistence type="inferred from homology"/>
<sequence length="642" mass="73507">MSEIVVTLPDGSELEMESGSTVEDVAYEIGPGLGDDTVAGVVDGELVDKAEQLTDDCELVIVTDQSDEYLQVLRHSAAHVFAQALQRLHPEAKLAIGPPTEEGFYYDVTGVDLDADDLEAIEAEMETIIEADHDIERAERSREEAFEIYEDNPYKRDILETEAADEDPVSFYTQDDWQDLCQGPHVDSTGEIGAVELLNIAAAYWRGDEDNETLTRVYGTAFESESDLEGFLQRREEAKKRDHRKLGQELDLFSIPDVTGPGLPLYHPNGKAVLRELEDFVDQLNDDQGYEFVETPHLFRTELWKQSGHYENYVDDMFLLDVNDEEYGLKPMNCPGHATIFNQGNWSYRDLPVRYAENGKVYRKEQRGELSGLSRVWAFTIDDGHLFVERDAIEQEVNVIMDQIEEVLDTFDLDYEVALATRPEKSVGSDEIWEQAQTQLRSVLESSGMDYDIESGDGAFYGPKIDFAFEDALGRNWDGPTVQLDFNMPERFDLTYTGEDNEEHRPVMIHRALYGSYERFFMVLIEHFDGNFPTWLAPEQVRILPVSDDNIGYAKQLKNRYLDDFRVEIEDRSWTVGKKIQTAHDDRVPYMLVVGDNEEEAGTVSVRDRFEDERKDVDVETFRDHLASEVEEKRVEPDFVDE</sequence>